<sequence>MSWKTEEVESHIPVMLKEFLKHCSPKRDEQWIDGTFGYGGHTTALLDKGCKVLALDTDEDAQKRAEILKEKGEEFYFFRKNFSEMAEACFQMGWTAVDGILLDLGVSLGQLKDPKRGFSFQFPDAPLDMRMDRTRERTGAALLNTLSKEQLVQLFSVACNMKESQKLANEIVRFRSTGPIKKVGDFLEIVTRARLLKSKINAATRPFLALRIAVNEELEHLEKALREGTKLLKGGGRIAVISFHSAEDRIVKEFMRSHCLPKKGEGVAEEENHREMFFYKVERVLVSLEERKNNPRSRSARLRIAWKIPLEEKSGL</sequence>
<organism>
    <name type="scientific">Methylacidiphilum infernorum (isolate V4)</name>
    <name type="common">Methylokorus infernorum (strain V4)</name>
    <dbReference type="NCBI Taxonomy" id="481448"/>
    <lineage>
        <taxon>Bacteria</taxon>
        <taxon>Pseudomonadati</taxon>
        <taxon>Verrucomicrobiota</taxon>
        <taxon>Methylacidiphilae</taxon>
        <taxon>Methylacidiphilales</taxon>
        <taxon>Methylacidiphilaceae</taxon>
        <taxon>Methylacidiphilum (ex Ratnadevi et al. 2023)</taxon>
    </lineage>
</organism>
<keyword id="KW-0963">Cytoplasm</keyword>
<keyword id="KW-0489">Methyltransferase</keyword>
<keyword id="KW-0698">rRNA processing</keyword>
<keyword id="KW-0949">S-adenosyl-L-methionine</keyword>
<keyword id="KW-0808">Transferase</keyword>
<dbReference type="EC" id="2.1.1.199" evidence="1"/>
<dbReference type="EMBL" id="CP000975">
    <property type="protein sequence ID" value="ACD83473.1"/>
    <property type="molecule type" value="Genomic_DNA"/>
</dbReference>
<dbReference type="RefSeq" id="WP_012463755.1">
    <property type="nucleotide sequence ID" value="NC_010794.1"/>
</dbReference>
<dbReference type="SMR" id="B3DVX0"/>
<dbReference type="STRING" id="481448.Minf_1419"/>
<dbReference type="KEGG" id="min:Minf_1419"/>
<dbReference type="eggNOG" id="COG0275">
    <property type="taxonomic scope" value="Bacteria"/>
</dbReference>
<dbReference type="HOGENOM" id="CLU_038422_3_0_0"/>
<dbReference type="OrthoDB" id="9806637at2"/>
<dbReference type="Proteomes" id="UP000009149">
    <property type="component" value="Chromosome"/>
</dbReference>
<dbReference type="GO" id="GO:0005737">
    <property type="term" value="C:cytoplasm"/>
    <property type="evidence" value="ECO:0007669"/>
    <property type="project" value="UniProtKB-SubCell"/>
</dbReference>
<dbReference type="GO" id="GO:0071424">
    <property type="term" value="F:rRNA (cytosine-N4-)-methyltransferase activity"/>
    <property type="evidence" value="ECO:0007669"/>
    <property type="project" value="UniProtKB-UniRule"/>
</dbReference>
<dbReference type="GO" id="GO:0070475">
    <property type="term" value="P:rRNA base methylation"/>
    <property type="evidence" value="ECO:0007669"/>
    <property type="project" value="UniProtKB-UniRule"/>
</dbReference>
<dbReference type="Gene3D" id="1.10.150.170">
    <property type="entry name" value="Putative methyltransferase TM0872, insert domain"/>
    <property type="match status" value="1"/>
</dbReference>
<dbReference type="Gene3D" id="3.40.50.150">
    <property type="entry name" value="Vaccinia Virus protein VP39"/>
    <property type="match status" value="1"/>
</dbReference>
<dbReference type="HAMAP" id="MF_01007">
    <property type="entry name" value="16SrRNA_methyltr_H"/>
    <property type="match status" value="1"/>
</dbReference>
<dbReference type="InterPro" id="IPR002903">
    <property type="entry name" value="RsmH"/>
</dbReference>
<dbReference type="InterPro" id="IPR023397">
    <property type="entry name" value="SAM-dep_MeTrfase_MraW_recog"/>
</dbReference>
<dbReference type="InterPro" id="IPR029063">
    <property type="entry name" value="SAM-dependent_MTases_sf"/>
</dbReference>
<dbReference type="NCBIfam" id="TIGR00006">
    <property type="entry name" value="16S rRNA (cytosine(1402)-N(4))-methyltransferase RsmH"/>
    <property type="match status" value="1"/>
</dbReference>
<dbReference type="PANTHER" id="PTHR11265:SF0">
    <property type="entry name" value="12S RRNA N4-METHYLCYTIDINE METHYLTRANSFERASE"/>
    <property type="match status" value="1"/>
</dbReference>
<dbReference type="PANTHER" id="PTHR11265">
    <property type="entry name" value="S-ADENOSYL-METHYLTRANSFERASE MRAW"/>
    <property type="match status" value="1"/>
</dbReference>
<dbReference type="Pfam" id="PF01795">
    <property type="entry name" value="Methyltransf_5"/>
    <property type="match status" value="1"/>
</dbReference>
<dbReference type="PIRSF" id="PIRSF004486">
    <property type="entry name" value="MraW"/>
    <property type="match status" value="1"/>
</dbReference>
<dbReference type="SUPFAM" id="SSF81799">
    <property type="entry name" value="Putative methyltransferase TM0872, insert domain"/>
    <property type="match status" value="1"/>
</dbReference>
<dbReference type="SUPFAM" id="SSF53335">
    <property type="entry name" value="S-adenosyl-L-methionine-dependent methyltransferases"/>
    <property type="match status" value="1"/>
</dbReference>
<comment type="function">
    <text evidence="1">Specifically methylates the N4 position of cytidine in position 1402 (C1402) of 16S rRNA.</text>
</comment>
<comment type="catalytic activity">
    <reaction evidence="1">
        <text>cytidine(1402) in 16S rRNA + S-adenosyl-L-methionine = N(4)-methylcytidine(1402) in 16S rRNA + S-adenosyl-L-homocysteine + H(+)</text>
        <dbReference type="Rhea" id="RHEA:42928"/>
        <dbReference type="Rhea" id="RHEA-COMP:10286"/>
        <dbReference type="Rhea" id="RHEA-COMP:10287"/>
        <dbReference type="ChEBI" id="CHEBI:15378"/>
        <dbReference type="ChEBI" id="CHEBI:57856"/>
        <dbReference type="ChEBI" id="CHEBI:59789"/>
        <dbReference type="ChEBI" id="CHEBI:74506"/>
        <dbReference type="ChEBI" id="CHEBI:82748"/>
        <dbReference type="EC" id="2.1.1.199"/>
    </reaction>
</comment>
<comment type="subcellular location">
    <subcellularLocation>
        <location evidence="1">Cytoplasm</location>
    </subcellularLocation>
</comment>
<comment type="similarity">
    <text evidence="1">Belongs to the methyltransferase superfamily. RsmH family.</text>
</comment>
<name>RSMH_METI4</name>
<feature type="chain" id="PRO_0000386971" description="Ribosomal RNA small subunit methyltransferase H">
    <location>
        <begin position="1"/>
        <end position="316"/>
    </location>
</feature>
<feature type="binding site" evidence="1">
    <location>
        <begin position="39"/>
        <end position="41"/>
    </location>
    <ligand>
        <name>S-adenosyl-L-methionine</name>
        <dbReference type="ChEBI" id="CHEBI:59789"/>
    </ligand>
</feature>
<feature type="binding site" evidence="1">
    <location>
        <position position="56"/>
    </location>
    <ligand>
        <name>S-adenosyl-L-methionine</name>
        <dbReference type="ChEBI" id="CHEBI:59789"/>
    </ligand>
</feature>
<feature type="binding site" evidence="1">
    <location>
        <position position="82"/>
    </location>
    <ligand>
        <name>S-adenosyl-L-methionine</name>
        <dbReference type="ChEBI" id="CHEBI:59789"/>
    </ligand>
</feature>
<feature type="binding site" evidence="1">
    <location>
        <position position="103"/>
    </location>
    <ligand>
        <name>S-adenosyl-L-methionine</name>
        <dbReference type="ChEBI" id="CHEBI:59789"/>
    </ligand>
</feature>
<feature type="binding site" evidence="1">
    <location>
        <position position="110"/>
    </location>
    <ligand>
        <name>S-adenosyl-L-methionine</name>
        <dbReference type="ChEBI" id="CHEBI:59789"/>
    </ligand>
</feature>
<evidence type="ECO:0000255" key="1">
    <source>
        <dbReference type="HAMAP-Rule" id="MF_01007"/>
    </source>
</evidence>
<protein>
    <recommendedName>
        <fullName evidence="1">Ribosomal RNA small subunit methyltransferase H</fullName>
        <ecNumber evidence="1">2.1.1.199</ecNumber>
    </recommendedName>
    <alternativeName>
        <fullName evidence="1">16S rRNA m(4)C1402 methyltransferase</fullName>
    </alternativeName>
    <alternativeName>
        <fullName evidence="1">rRNA (cytosine-N(4)-)-methyltransferase RsmH</fullName>
    </alternativeName>
</protein>
<reference key="1">
    <citation type="journal article" date="2008" name="Biol. Direct">
        <title>Complete genome sequence of the extremely acidophilic methanotroph isolate V4, Methylacidiphilum infernorum, a representative of the bacterial phylum Verrucomicrobia.</title>
        <authorList>
            <person name="Hou S."/>
            <person name="Makarova K.S."/>
            <person name="Saw J.H."/>
            <person name="Senin P."/>
            <person name="Ly B.V."/>
            <person name="Zhou Z."/>
            <person name="Ren Y."/>
            <person name="Wang J."/>
            <person name="Galperin M.Y."/>
            <person name="Omelchenko M.V."/>
            <person name="Wolf Y.I."/>
            <person name="Yutin N."/>
            <person name="Koonin E.V."/>
            <person name="Stott M.B."/>
            <person name="Mountain B.W."/>
            <person name="Crowe M.A."/>
            <person name="Smirnova A.V."/>
            <person name="Dunfield P.F."/>
            <person name="Feng L."/>
            <person name="Wang L."/>
            <person name="Alam M."/>
        </authorList>
    </citation>
    <scope>NUCLEOTIDE SEQUENCE [LARGE SCALE GENOMIC DNA]</scope>
    <source>
        <strain>Isolate V4</strain>
    </source>
</reference>
<gene>
    <name evidence="1" type="primary">rsmH</name>
    <name type="synonym">mraW</name>
    <name type="ordered locus">Minf_1419</name>
</gene>
<accession>B3DVX0</accession>
<proteinExistence type="inferred from homology"/>